<comment type="function">
    <text evidence="2">Chemotactic factor that mediates inflammatory response by attracting neutrophils, basophils, and T-cells to clear pathogens and protect the host from infection. Also plays an important role in neutrophil activation. Released in response to an inflammatory stimulus, exerts its effect by binding to the G-protein-coupled receptors CXCR1 and CXCR2, primarily found in neutrophils, monocytes and endothelial cells. G-protein heterotrimer (alpha, beta, gamma subunits) constitutively binds to CXCR1/CXCR2 receptor and activation by IL8 leads to beta and gamma subunits release from Galpha (GNAI2 in neutrophils) and activation of several downstream signaling pathways including PI3K and MAPK pathways.</text>
</comment>
<comment type="subunit">
    <text evidence="2">Homodimer. Interacts with TNFAIP6 (via Link domain); this interaction interferes with chemokine binding to glycosaminoglycans.</text>
</comment>
<comment type="subcellular location">
    <subcellularLocation>
        <location>Secreted</location>
    </subcellularLocation>
</comment>
<comment type="similarity">
    <text evidence="3">Belongs to the intercrine alpha (chemokine CxC) family.</text>
</comment>
<organism>
    <name type="scientific">Cavia porcellus</name>
    <name type="common">Guinea pig</name>
    <dbReference type="NCBI Taxonomy" id="10141"/>
    <lineage>
        <taxon>Eukaryota</taxon>
        <taxon>Metazoa</taxon>
        <taxon>Chordata</taxon>
        <taxon>Craniata</taxon>
        <taxon>Vertebrata</taxon>
        <taxon>Euteleostomi</taxon>
        <taxon>Mammalia</taxon>
        <taxon>Eutheria</taxon>
        <taxon>Euarchontoglires</taxon>
        <taxon>Glires</taxon>
        <taxon>Rodentia</taxon>
        <taxon>Hystricomorpha</taxon>
        <taxon>Caviidae</taxon>
        <taxon>Cavia</taxon>
    </lineage>
</organism>
<keyword id="KW-0145">Chemotaxis</keyword>
<keyword id="KW-0202">Cytokine</keyword>
<keyword id="KW-1015">Disulfide bond</keyword>
<keyword id="KW-0395">Inflammatory response</keyword>
<keyword id="KW-1185">Reference proteome</keyword>
<keyword id="KW-0964">Secreted</keyword>
<keyword id="KW-0732">Signal</keyword>
<evidence type="ECO:0000250" key="1"/>
<evidence type="ECO:0000250" key="2">
    <source>
        <dbReference type="UniProtKB" id="P10145"/>
    </source>
</evidence>
<evidence type="ECO:0000305" key="3"/>
<gene>
    <name type="primary">CXCL8</name>
    <name type="synonym">IL8</name>
</gene>
<protein>
    <recommendedName>
        <fullName>Interleukin-8</fullName>
        <shortName>IL-8</shortName>
    </recommendedName>
    <alternativeName>
        <fullName>C-X-C motif chemokine 8</fullName>
    </alternativeName>
    <alternativeName>
        <fullName>Chemokine (C-X-C motif) ligand 8</fullName>
    </alternativeName>
    <alternativeName>
        <fullName>Neutrophil attractant protein 1</fullName>
        <shortName>NAP-1</shortName>
    </alternativeName>
</protein>
<reference key="1">
    <citation type="journal article" date="1993" name="J. Immunol.">
        <title>cDNA cloning and expression of guinea pig neutrophil attractant protein-1 (NAP-1). NAP-1 is highly conserved in guinea pig.</title>
        <authorList>
            <person name="Yoshimura T."/>
            <person name="Johnson D.G."/>
        </authorList>
    </citation>
    <scope>NUCLEOTIDE SEQUENCE [GENOMIC DNA]</scope>
    <source>
        <tissue>Spleen</tissue>
    </source>
</reference>
<sequence>MPSQLRVAVLAAFLLSAVLCEGMVVTKLVSELRCQCIKIHTTPFHPKFIKELKVIESGPRCANSEIIVKLSDNRQLCLDPKKKWVQDVVSMFLKRTESQDS</sequence>
<name>IL8_CAVPO</name>
<feature type="signal peptide" evidence="1">
    <location>
        <begin position="1"/>
        <end position="22"/>
    </location>
</feature>
<feature type="chain" id="PRO_0000005122" description="Interleukin-8">
    <location>
        <begin position="23"/>
        <end position="101"/>
    </location>
</feature>
<feature type="disulfide bond" evidence="1">
    <location>
        <begin position="34"/>
        <end position="61"/>
    </location>
</feature>
<feature type="disulfide bond" evidence="1">
    <location>
        <begin position="36"/>
        <end position="77"/>
    </location>
</feature>
<proteinExistence type="inferred from homology"/>
<dbReference type="EMBL" id="L04986">
    <property type="protein sequence ID" value="AAA37049.1"/>
    <property type="molecule type" value="Genomic_DNA"/>
</dbReference>
<dbReference type="PIR" id="I48148">
    <property type="entry name" value="I48148"/>
</dbReference>
<dbReference type="RefSeq" id="NP_001166870.1">
    <property type="nucleotide sequence ID" value="NM_001173399.2"/>
</dbReference>
<dbReference type="SMR" id="P49113"/>
<dbReference type="STRING" id="10141.ENSCPOP00000022018"/>
<dbReference type="GeneID" id="100379599"/>
<dbReference type="KEGG" id="cpoc:100379599"/>
<dbReference type="CTD" id="3576"/>
<dbReference type="eggNOG" id="ENOG502S7MM">
    <property type="taxonomic scope" value="Eukaryota"/>
</dbReference>
<dbReference type="InParanoid" id="P49113"/>
<dbReference type="OrthoDB" id="9937393at2759"/>
<dbReference type="Proteomes" id="UP000005447">
    <property type="component" value="Unassembled WGS sequence"/>
</dbReference>
<dbReference type="GO" id="GO:0005615">
    <property type="term" value="C:extracellular space"/>
    <property type="evidence" value="ECO:0007669"/>
    <property type="project" value="UniProtKB-KW"/>
</dbReference>
<dbReference type="GO" id="GO:0008009">
    <property type="term" value="F:chemokine activity"/>
    <property type="evidence" value="ECO:0007669"/>
    <property type="project" value="InterPro"/>
</dbReference>
<dbReference type="GO" id="GO:0008201">
    <property type="term" value="F:heparin binding"/>
    <property type="evidence" value="ECO:0000250"/>
    <property type="project" value="UniProtKB"/>
</dbReference>
<dbReference type="GO" id="GO:0006955">
    <property type="term" value="P:immune response"/>
    <property type="evidence" value="ECO:0007669"/>
    <property type="project" value="InterPro"/>
</dbReference>
<dbReference type="GO" id="GO:0006954">
    <property type="term" value="P:inflammatory response"/>
    <property type="evidence" value="ECO:0007669"/>
    <property type="project" value="UniProtKB-KW"/>
</dbReference>
<dbReference type="GO" id="GO:0030593">
    <property type="term" value="P:neutrophil chemotaxis"/>
    <property type="evidence" value="ECO:0000250"/>
    <property type="project" value="UniProtKB"/>
</dbReference>
<dbReference type="CDD" id="cd00273">
    <property type="entry name" value="Chemokine_CXC"/>
    <property type="match status" value="1"/>
</dbReference>
<dbReference type="FunFam" id="2.40.50.40:FF:000004">
    <property type="entry name" value="C-X-C motif chemokine"/>
    <property type="match status" value="1"/>
</dbReference>
<dbReference type="Gene3D" id="2.40.50.40">
    <property type="match status" value="1"/>
</dbReference>
<dbReference type="InterPro" id="IPR039809">
    <property type="entry name" value="Chemokine_b/g/d"/>
</dbReference>
<dbReference type="InterPro" id="IPR001089">
    <property type="entry name" value="Chemokine_CXC"/>
</dbReference>
<dbReference type="InterPro" id="IPR018048">
    <property type="entry name" value="Chemokine_CXC_CS"/>
</dbReference>
<dbReference type="InterPro" id="IPR001811">
    <property type="entry name" value="Chemokine_IL8-like_dom"/>
</dbReference>
<dbReference type="InterPro" id="IPR033899">
    <property type="entry name" value="CXC_Chemokine_domain"/>
</dbReference>
<dbReference type="InterPro" id="IPR036048">
    <property type="entry name" value="Interleukin_8-like_sf"/>
</dbReference>
<dbReference type="PANTHER" id="PTHR12015:SF200">
    <property type="entry name" value="INTERLEUKIN-8"/>
    <property type="match status" value="1"/>
</dbReference>
<dbReference type="PANTHER" id="PTHR12015">
    <property type="entry name" value="SMALL INDUCIBLE CYTOKINE A"/>
    <property type="match status" value="1"/>
</dbReference>
<dbReference type="Pfam" id="PF00048">
    <property type="entry name" value="IL8"/>
    <property type="match status" value="1"/>
</dbReference>
<dbReference type="PRINTS" id="PR00436">
    <property type="entry name" value="INTERLEUKIN8"/>
</dbReference>
<dbReference type="PRINTS" id="PR00437">
    <property type="entry name" value="SMALLCYTKCXC"/>
</dbReference>
<dbReference type="SMART" id="SM00199">
    <property type="entry name" value="SCY"/>
    <property type="match status" value="1"/>
</dbReference>
<dbReference type="SUPFAM" id="SSF54117">
    <property type="entry name" value="Interleukin 8-like chemokines"/>
    <property type="match status" value="1"/>
</dbReference>
<dbReference type="PROSITE" id="PS00471">
    <property type="entry name" value="SMALL_CYTOKINES_CXC"/>
    <property type="match status" value="1"/>
</dbReference>
<accession>P49113</accession>